<proteinExistence type="inferred from homology"/>
<name>UBIE_CAUVC</name>
<gene>
    <name evidence="1" type="primary">ubiE</name>
    <name type="ordered locus">CC_3708</name>
</gene>
<keyword id="KW-0474">Menaquinone biosynthesis</keyword>
<keyword id="KW-0489">Methyltransferase</keyword>
<keyword id="KW-1185">Reference proteome</keyword>
<keyword id="KW-0949">S-adenosyl-L-methionine</keyword>
<keyword id="KW-0808">Transferase</keyword>
<keyword id="KW-0831">Ubiquinone biosynthesis</keyword>
<feature type="chain" id="PRO_0000193262" description="Ubiquinone/menaquinone biosynthesis C-methyltransferase UbiE">
    <location>
        <begin position="1"/>
        <end position="252"/>
    </location>
</feature>
<feature type="binding site" evidence="1">
    <location>
        <position position="71"/>
    </location>
    <ligand>
        <name>S-adenosyl-L-methionine</name>
        <dbReference type="ChEBI" id="CHEBI:59789"/>
    </ligand>
</feature>
<feature type="binding site" evidence="1">
    <location>
        <position position="100"/>
    </location>
    <ligand>
        <name>S-adenosyl-L-methionine</name>
        <dbReference type="ChEBI" id="CHEBI:59789"/>
    </ligand>
</feature>
<feature type="binding site" evidence="1">
    <location>
        <begin position="124"/>
        <end position="125"/>
    </location>
    <ligand>
        <name>S-adenosyl-L-methionine</name>
        <dbReference type="ChEBI" id="CHEBI:59789"/>
    </ligand>
</feature>
<feature type="binding site" evidence="1">
    <location>
        <position position="141"/>
    </location>
    <ligand>
        <name>S-adenosyl-L-methionine</name>
        <dbReference type="ChEBI" id="CHEBI:59789"/>
    </ligand>
</feature>
<dbReference type="EC" id="2.1.1.163" evidence="1"/>
<dbReference type="EC" id="2.1.1.201" evidence="1"/>
<dbReference type="EMBL" id="AE005673">
    <property type="protein sequence ID" value="AAK25670.1"/>
    <property type="molecule type" value="Genomic_DNA"/>
</dbReference>
<dbReference type="PIR" id="B87709">
    <property type="entry name" value="B87709"/>
</dbReference>
<dbReference type="RefSeq" id="NP_422502.1">
    <property type="nucleotide sequence ID" value="NC_002696.2"/>
</dbReference>
<dbReference type="RefSeq" id="WP_010921535.1">
    <property type="nucleotide sequence ID" value="NC_002696.2"/>
</dbReference>
<dbReference type="SMR" id="Q9A258"/>
<dbReference type="STRING" id="190650.CC_3708"/>
<dbReference type="EnsemblBacteria" id="AAK25670">
    <property type="protein sequence ID" value="AAK25670"/>
    <property type="gene ID" value="CC_3708"/>
</dbReference>
<dbReference type="KEGG" id="ccr:CC_3708"/>
<dbReference type="PATRIC" id="fig|190650.5.peg.3709"/>
<dbReference type="eggNOG" id="COG2226">
    <property type="taxonomic scope" value="Bacteria"/>
</dbReference>
<dbReference type="HOGENOM" id="CLU_037990_0_0_5"/>
<dbReference type="BioCyc" id="CAULO:CC3708-MONOMER"/>
<dbReference type="UniPathway" id="UPA00079">
    <property type="reaction ID" value="UER00169"/>
</dbReference>
<dbReference type="UniPathway" id="UPA00232"/>
<dbReference type="Proteomes" id="UP000001816">
    <property type="component" value="Chromosome"/>
</dbReference>
<dbReference type="GO" id="GO:0008425">
    <property type="term" value="F:2-methoxy-6-polyprenyl-1,4-benzoquinol methyltransferase activity"/>
    <property type="evidence" value="ECO:0007669"/>
    <property type="project" value="UniProtKB-UniRule"/>
</dbReference>
<dbReference type="GO" id="GO:0043770">
    <property type="term" value="F:demethylmenaquinone methyltransferase activity"/>
    <property type="evidence" value="ECO:0007669"/>
    <property type="project" value="UniProtKB-UniRule"/>
</dbReference>
<dbReference type="GO" id="GO:0009060">
    <property type="term" value="P:aerobic respiration"/>
    <property type="evidence" value="ECO:0007669"/>
    <property type="project" value="UniProtKB-UniRule"/>
</dbReference>
<dbReference type="GO" id="GO:0009234">
    <property type="term" value="P:menaquinone biosynthetic process"/>
    <property type="evidence" value="ECO:0007669"/>
    <property type="project" value="UniProtKB-UniRule"/>
</dbReference>
<dbReference type="GO" id="GO:0032259">
    <property type="term" value="P:methylation"/>
    <property type="evidence" value="ECO:0007669"/>
    <property type="project" value="UniProtKB-KW"/>
</dbReference>
<dbReference type="CDD" id="cd02440">
    <property type="entry name" value="AdoMet_MTases"/>
    <property type="match status" value="1"/>
</dbReference>
<dbReference type="Gene3D" id="3.40.50.150">
    <property type="entry name" value="Vaccinia Virus protein VP39"/>
    <property type="match status" value="1"/>
</dbReference>
<dbReference type="HAMAP" id="MF_01813">
    <property type="entry name" value="MenG_UbiE_methyltr"/>
    <property type="match status" value="1"/>
</dbReference>
<dbReference type="InterPro" id="IPR029063">
    <property type="entry name" value="SAM-dependent_MTases_sf"/>
</dbReference>
<dbReference type="InterPro" id="IPR004033">
    <property type="entry name" value="UbiE/COQ5_MeTrFase"/>
</dbReference>
<dbReference type="InterPro" id="IPR023576">
    <property type="entry name" value="UbiE/COQ5_MeTrFase_CS"/>
</dbReference>
<dbReference type="NCBIfam" id="TIGR01934">
    <property type="entry name" value="MenG_MenH_UbiE"/>
    <property type="match status" value="1"/>
</dbReference>
<dbReference type="PANTHER" id="PTHR43591:SF24">
    <property type="entry name" value="2-METHOXY-6-POLYPRENYL-1,4-BENZOQUINOL METHYLASE, MITOCHONDRIAL"/>
    <property type="match status" value="1"/>
</dbReference>
<dbReference type="PANTHER" id="PTHR43591">
    <property type="entry name" value="METHYLTRANSFERASE"/>
    <property type="match status" value="1"/>
</dbReference>
<dbReference type="Pfam" id="PF01209">
    <property type="entry name" value="Ubie_methyltran"/>
    <property type="match status" value="1"/>
</dbReference>
<dbReference type="SUPFAM" id="SSF53335">
    <property type="entry name" value="S-adenosyl-L-methionine-dependent methyltransferases"/>
    <property type="match status" value="1"/>
</dbReference>
<dbReference type="PROSITE" id="PS51608">
    <property type="entry name" value="SAM_MT_UBIE"/>
    <property type="match status" value="1"/>
</dbReference>
<dbReference type="PROSITE" id="PS01183">
    <property type="entry name" value="UBIE_1"/>
    <property type="match status" value="1"/>
</dbReference>
<dbReference type="PROSITE" id="PS01184">
    <property type="entry name" value="UBIE_2"/>
    <property type="match status" value="1"/>
</dbReference>
<protein>
    <recommendedName>
        <fullName evidence="1">Ubiquinone/menaquinone biosynthesis C-methyltransferase UbiE</fullName>
        <ecNumber evidence="1">2.1.1.163</ecNumber>
        <ecNumber evidence="1">2.1.1.201</ecNumber>
    </recommendedName>
    <alternativeName>
        <fullName evidence="1">2-methoxy-6-polyprenyl-1,4-benzoquinol methylase</fullName>
    </alternativeName>
    <alternativeName>
        <fullName evidence="1">Demethylmenaquinone methyltransferase</fullName>
    </alternativeName>
</protein>
<reference key="1">
    <citation type="journal article" date="2001" name="Proc. Natl. Acad. Sci. U.S.A.">
        <title>Complete genome sequence of Caulobacter crescentus.</title>
        <authorList>
            <person name="Nierman W.C."/>
            <person name="Feldblyum T.V."/>
            <person name="Laub M.T."/>
            <person name="Paulsen I.T."/>
            <person name="Nelson K.E."/>
            <person name="Eisen J.A."/>
            <person name="Heidelberg J.F."/>
            <person name="Alley M.R.K."/>
            <person name="Ohta N."/>
            <person name="Maddock J.R."/>
            <person name="Potocka I."/>
            <person name="Nelson W.C."/>
            <person name="Newton A."/>
            <person name="Stephens C."/>
            <person name="Phadke N.D."/>
            <person name="Ely B."/>
            <person name="DeBoy R.T."/>
            <person name="Dodson R.J."/>
            <person name="Durkin A.S."/>
            <person name="Gwinn M.L."/>
            <person name="Haft D.H."/>
            <person name="Kolonay J.F."/>
            <person name="Smit J."/>
            <person name="Craven M.B."/>
            <person name="Khouri H.M."/>
            <person name="Shetty J."/>
            <person name="Berry K.J."/>
            <person name="Utterback T.R."/>
            <person name="Tran K."/>
            <person name="Wolf A.M."/>
            <person name="Vamathevan J.J."/>
            <person name="Ermolaeva M.D."/>
            <person name="White O."/>
            <person name="Salzberg S.L."/>
            <person name="Venter J.C."/>
            <person name="Shapiro L."/>
            <person name="Fraser C.M."/>
        </authorList>
    </citation>
    <scope>NUCLEOTIDE SEQUENCE [LARGE SCALE GENOMIC DNA]</scope>
    <source>
        <strain>ATCC 19089 / CIP 103742 / CB 15</strain>
    </source>
</reference>
<comment type="function">
    <text evidence="1">Methyltransferase required for the conversion of demethylmenaquinol (DMKH2) to menaquinol (MKH2) and the conversion of 2-polyprenyl-6-methoxy-1,4-benzoquinol (DDMQH2) to 2-polyprenyl-3-methyl-6-methoxy-1,4-benzoquinol (DMQH2).</text>
</comment>
<comment type="catalytic activity">
    <reaction evidence="1">
        <text>a 2-demethylmenaquinol + S-adenosyl-L-methionine = a menaquinol + S-adenosyl-L-homocysteine + H(+)</text>
        <dbReference type="Rhea" id="RHEA:42640"/>
        <dbReference type="Rhea" id="RHEA-COMP:9539"/>
        <dbReference type="Rhea" id="RHEA-COMP:9563"/>
        <dbReference type="ChEBI" id="CHEBI:15378"/>
        <dbReference type="ChEBI" id="CHEBI:18151"/>
        <dbReference type="ChEBI" id="CHEBI:55437"/>
        <dbReference type="ChEBI" id="CHEBI:57856"/>
        <dbReference type="ChEBI" id="CHEBI:59789"/>
        <dbReference type="EC" id="2.1.1.163"/>
    </reaction>
</comment>
<comment type="catalytic activity">
    <reaction evidence="1">
        <text>a 2-methoxy-6-(all-trans-polyprenyl)benzene-1,4-diol + S-adenosyl-L-methionine = a 5-methoxy-2-methyl-3-(all-trans-polyprenyl)benzene-1,4-diol + S-adenosyl-L-homocysteine + H(+)</text>
        <dbReference type="Rhea" id="RHEA:28286"/>
        <dbReference type="Rhea" id="RHEA-COMP:10858"/>
        <dbReference type="Rhea" id="RHEA-COMP:10859"/>
        <dbReference type="ChEBI" id="CHEBI:15378"/>
        <dbReference type="ChEBI" id="CHEBI:57856"/>
        <dbReference type="ChEBI" id="CHEBI:59789"/>
        <dbReference type="ChEBI" id="CHEBI:84166"/>
        <dbReference type="ChEBI" id="CHEBI:84167"/>
        <dbReference type="EC" id="2.1.1.201"/>
    </reaction>
</comment>
<comment type="pathway">
    <text evidence="1">Quinol/quinone metabolism; menaquinone biosynthesis; menaquinol from 1,4-dihydroxy-2-naphthoate: step 2/2.</text>
</comment>
<comment type="pathway">
    <text evidence="1">Cofactor biosynthesis; ubiquinone biosynthesis.</text>
</comment>
<comment type="similarity">
    <text evidence="1">Belongs to the class I-like SAM-binding methyltransferase superfamily. MenG/UbiE family.</text>
</comment>
<accession>Q9A258</accession>
<evidence type="ECO:0000255" key="1">
    <source>
        <dbReference type="HAMAP-Rule" id="MF_01813"/>
    </source>
</evidence>
<sequence length="252" mass="27747">MSNTSASFGFKDVDASLKAGLVRGVFDRVAKNYDIMNDLMSGGVHRLWKDAVAARLNPQPGEVIIDCAGGTGDMARRFAKMARKAQERRGGPDATINIVDYNAEMIMAGIERGGEPEITWTVGDAQRLPLPDAYADAYVISFGIRNVTDINAALREARRVLKPGGRFLCLEFSRPVTEPLAKAYDAYSFKVIPQVGEWVAKDRDAYQYLVESIRRFPDQRTFAGMIEAAGFKRVTFTNFTGGVAALHQGWAI</sequence>
<organism>
    <name type="scientific">Caulobacter vibrioides (strain ATCC 19089 / CIP 103742 / CB 15)</name>
    <name type="common">Caulobacter crescentus</name>
    <dbReference type="NCBI Taxonomy" id="190650"/>
    <lineage>
        <taxon>Bacteria</taxon>
        <taxon>Pseudomonadati</taxon>
        <taxon>Pseudomonadota</taxon>
        <taxon>Alphaproteobacteria</taxon>
        <taxon>Caulobacterales</taxon>
        <taxon>Caulobacteraceae</taxon>
        <taxon>Caulobacter</taxon>
    </lineage>
</organism>